<name>RUVA_BRUAB</name>
<comment type="function">
    <text evidence="1">The RuvA-RuvB-RuvC complex processes Holliday junction (HJ) DNA during genetic recombination and DNA repair, while the RuvA-RuvB complex plays an important role in the rescue of blocked DNA replication forks via replication fork reversal (RFR). RuvA specifically binds to HJ cruciform DNA, conferring on it an open structure. The RuvB hexamer acts as an ATP-dependent pump, pulling dsDNA into and through the RuvAB complex. HJ branch migration allows RuvC to scan DNA until it finds its consensus sequence, where it cleaves and resolves the cruciform DNA.</text>
</comment>
<comment type="subunit">
    <text evidence="1">Homotetramer. Forms an RuvA(8)-RuvB(12)-Holliday junction (HJ) complex. HJ DNA is sandwiched between 2 RuvA tetramers; dsDNA enters through RuvA and exits via RuvB. An RuvB hexamer assembles on each DNA strand where it exits the tetramer. Each RuvB hexamer is contacted by two RuvA subunits (via domain III) on 2 adjacent RuvB subunits; this complex drives branch migration. In the full resolvosome a probable DNA-RuvA(4)-RuvB(12)-RuvC(2) complex forms which resolves the HJ.</text>
</comment>
<comment type="subcellular location">
    <subcellularLocation>
        <location evidence="1">Cytoplasm</location>
    </subcellularLocation>
</comment>
<comment type="domain">
    <text evidence="1">Has three domains with a flexible linker between the domains II and III and assumes an 'L' shape. Domain III is highly mobile and contacts RuvB.</text>
</comment>
<comment type="similarity">
    <text evidence="1">Belongs to the RuvA family.</text>
</comment>
<sequence>MIGKLKGVIDEIAEDHAVIDVHGVGYVAFCSARTLGNLGGAGEAAILFIETYVREDMIRLYGFATQLEREWFRLLQNVQGVGAKVALAVLGTLSPSELANAIALRDIAMVSRAPGVGKKVAERIVTELKNKAPAFAGEASGTIGLKQELGAGAAPAPVADAVSALSNLGYSRDQAANAVAAALKETGEGADSAKLIRLGLKELSQ</sequence>
<dbReference type="EMBL" id="AE017223">
    <property type="protein sequence ID" value="AAX75007.1"/>
    <property type="molecule type" value="Genomic_DNA"/>
</dbReference>
<dbReference type="RefSeq" id="WP_002964792.1">
    <property type="nucleotide sequence ID" value="NC_006932.1"/>
</dbReference>
<dbReference type="SMR" id="Q57BH7"/>
<dbReference type="EnsemblBacteria" id="AAX75007">
    <property type="protein sequence ID" value="AAX75007"/>
    <property type="gene ID" value="BruAb1_1688"/>
</dbReference>
<dbReference type="GeneID" id="97533143"/>
<dbReference type="KEGG" id="bmb:BruAb1_1688"/>
<dbReference type="HOGENOM" id="CLU_087936_3_0_5"/>
<dbReference type="Proteomes" id="UP000000540">
    <property type="component" value="Chromosome I"/>
</dbReference>
<dbReference type="GO" id="GO:0005737">
    <property type="term" value="C:cytoplasm"/>
    <property type="evidence" value="ECO:0007669"/>
    <property type="project" value="UniProtKB-SubCell"/>
</dbReference>
<dbReference type="GO" id="GO:0009379">
    <property type="term" value="C:Holliday junction helicase complex"/>
    <property type="evidence" value="ECO:0007669"/>
    <property type="project" value="InterPro"/>
</dbReference>
<dbReference type="GO" id="GO:0048476">
    <property type="term" value="C:Holliday junction resolvase complex"/>
    <property type="evidence" value="ECO:0007669"/>
    <property type="project" value="UniProtKB-UniRule"/>
</dbReference>
<dbReference type="GO" id="GO:0005524">
    <property type="term" value="F:ATP binding"/>
    <property type="evidence" value="ECO:0007669"/>
    <property type="project" value="InterPro"/>
</dbReference>
<dbReference type="GO" id="GO:0000400">
    <property type="term" value="F:four-way junction DNA binding"/>
    <property type="evidence" value="ECO:0007669"/>
    <property type="project" value="UniProtKB-UniRule"/>
</dbReference>
<dbReference type="GO" id="GO:0009378">
    <property type="term" value="F:four-way junction helicase activity"/>
    <property type="evidence" value="ECO:0007669"/>
    <property type="project" value="InterPro"/>
</dbReference>
<dbReference type="GO" id="GO:0006310">
    <property type="term" value="P:DNA recombination"/>
    <property type="evidence" value="ECO:0007669"/>
    <property type="project" value="UniProtKB-UniRule"/>
</dbReference>
<dbReference type="GO" id="GO:0006281">
    <property type="term" value="P:DNA repair"/>
    <property type="evidence" value="ECO:0007669"/>
    <property type="project" value="UniProtKB-UniRule"/>
</dbReference>
<dbReference type="Gene3D" id="1.10.150.20">
    <property type="entry name" value="5' to 3' exonuclease, C-terminal subdomain"/>
    <property type="match status" value="1"/>
</dbReference>
<dbReference type="Gene3D" id="1.10.8.10">
    <property type="entry name" value="DNA helicase RuvA subunit, C-terminal domain"/>
    <property type="match status" value="1"/>
</dbReference>
<dbReference type="Gene3D" id="2.40.50.140">
    <property type="entry name" value="Nucleic acid-binding proteins"/>
    <property type="match status" value="1"/>
</dbReference>
<dbReference type="HAMAP" id="MF_00031">
    <property type="entry name" value="DNA_HJ_migration_RuvA"/>
    <property type="match status" value="1"/>
</dbReference>
<dbReference type="InterPro" id="IPR013849">
    <property type="entry name" value="DNA_helicase_Holl-junc_RuvA_I"/>
</dbReference>
<dbReference type="InterPro" id="IPR003583">
    <property type="entry name" value="Hlx-hairpin-Hlx_DNA-bd_motif"/>
</dbReference>
<dbReference type="InterPro" id="IPR012340">
    <property type="entry name" value="NA-bd_OB-fold"/>
</dbReference>
<dbReference type="InterPro" id="IPR000085">
    <property type="entry name" value="RuvA"/>
</dbReference>
<dbReference type="InterPro" id="IPR010994">
    <property type="entry name" value="RuvA_2-like"/>
</dbReference>
<dbReference type="InterPro" id="IPR011114">
    <property type="entry name" value="RuvA_C"/>
</dbReference>
<dbReference type="InterPro" id="IPR036267">
    <property type="entry name" value="RuvA_C_sf"/>
</dbReference>
<dbReference type="NCBIfam" id="TIGR00084">
    <property type="entry name" value="ruvA"/>
    <property type="match status" value="1"/>
</dbReference>
<dbReference type="Pfam" id="PF14520">
    <property type="entry name" value="HHH_5"/>
    <property type="match status" value="1"/>
</dbReference>
<dbReference type="Pfam" id="PF07499">
    <property type="entry name" value="RuvA_C"/>
    <property type="match status" value="1"/>
</dbReference>
<dbReference type="Pfam" id="PF01330">
    <property type="entry name" value="RuvA_N"/>
    <property type="match status" value="1"/>
</dbReference>
<dbReference type="SMART" id="SM00278">
    <property type="entry name" value="HhH1"/>
    <property type="match status" value="2"/>
</dbReference>
<dbReference type="SUPFAM" id="SSF46929">
    <property type="entry name" value="DNA helicase RuvA subunit, C-terminal domain"/>
    <property type="match status" value="1"/>
</dbReference>
<dbReference type="SUPFAM" id="SSF50249">
    <property type="entry name" value="Nucleic acid-binding proteins"/>
    <property type="match status" value="1"/>
</dbReference>
<dbReference type="SUPFAM" id="SSF47781">
    <property type="entry name" value="RuvA domain 2-like"/>
    <property type="match status" value="1"/>
</dbReference>
<proteinExistence type="inferred from homology"/>
<evidence type="ECO:0000255" key="1">
    <source>
        <dbReference type="HAMAP-Rule" id="MF_00031"/>
    </source>
</evidence>
<feature type="chain" id="PRO_0000224848" description="Holliday junction branch migration complex subunit RuvA">
    <location>
        <begin position="1"/>
        <end position="205"/>
    </location>
</feature>
<feature type="region of interest" description="Domain I" evidence="1">
    <location>
        <begin position="1"/>
        <end position="64"/>
    </location>
</feature>
<feature type="region of interest" description="Domain II" evidence="1">
    <location>
        <begin position="65"/>
        <end position="143"/>
    </location>
</feature>
<feature type="region of interest" description="Flexible linker" evidence="1">
    <location>
        <begin position="144"/>
        <end position="152"/>
    </location>
</feature>
<feature type="region of interest" description="Domain III" evidence="1">
    <location>
        <begin position="153"/>
        <end position="205"/>
    </location>
</feature>
<keyword id="KW-0963">Cytoplasm</keyword>
<keyword id="KW-0227">DNA damage</keyword>
<keyword id="KW-0233">DNA recombination</keyword>
<keyword id="KW-0234">DNA repair</keyword>
<keyword id="KW-0238">DNA-binding</keyword>
<accession>Q57BH7</accession>
<organism>
    <name type="scientific">Brucella abortus biovar 1 (strain 9-941)</name>
    <dbReference type="NCBI Taxonomy" id="262698"/>
    <lineage>
        <taxon>Bacteria</taxon>
        <taxon>Pseudomonadati</taxon>
        <taxon>Pseudomonadota</taxon>
        <taxon>Alphaproteobacteria</taxon>
        <taxon>Hyphomicrobiales</taxon>
        <taxon>Brucellaceae</taxon>
        <taxon>Brucella/Ochrobactrum group</taxon>
        <taxon>Brucella</taxon>
    </lineage>
</organism>
<protein>
    <recommendedName>
        <fullName evidence="1">Holliday junction branch migration complex subunit RuvA</fullName>
    </recommendedName>
</protein>
<gene>
    <name evidence="1" type="primary">ruvA</name>
    <name type="ordered locus">BruAb1_1688</name>
</gene>
<reference key="1">
    <citation type="journal article" date="2005" name="J. Bacteriol.">
        <title>Completion of the genome sequence of Brucella abortus and comparison to the highly similar genomes of Brucella melitensis and Brucella suis.</title>
        <authorList>
            <person name="Halling S.M."/>
            <person name="Peterson-Burch B.D."/>
            <person name="Bricker B.J."/>
            <person name="Zuerner R.L."/>
            <person name="Qing Z."/>
            <person name="Li L.-L."/>
            <person name="Kapur V."/>
            <person name="Alt D.P."/>
            <person name="Olsen S.C."/>
        </authorList>
    </citation>
    <scope>NUCLEOTIDE SEQUENCE [LARGE SCALE GENOMIC DNA]</scope>
    <source>
        <strain>9-941</strain>
    </source>
</reference>